<sequence>MSCYTAILKSVGGLALFQVANGAIDLCRHFFMYFCEQKLRPNSFWFVVVRAIASMIMYLVLGIALLYISEQDDKKNTNNANTNNDSNSNNSNNDKRNESSINSNSSPK</sequence>
<feature type="signal peptide" evidence="1">
    <location>
        <begin position="1"/>
        <end position="22"/>
    </location>
</feature>
<feature type="chain" id="PRO_0000099227" description="Virion membrane protein OPG135">
    <location>
        <begin position="23"/>
        <end position="108"/>
    </location>
</feature>
<feature type="topological domain" description="Intravirion" evidence="1">
    <location>
        <begin position="23"/>
        <end position="45"/>
    </location>
</feature>
<feature type="transmembrane region" description="Helical" evidence="1">
    <location>
        <begin position="46"/>
        <end position="66"/>
    </location>
</feature>
<feature type="topological domain" description="Virion surface" evidence="1">
    <location>
        <begin position="67"/>
        <end position="83"/>
    </location>
</feature>
<feature type="region of interest" description="Disordered" evidence="2">
    <location>
        <begin position="76"/>
        <end position="108"/>
    </location>
</feature>
<feature type="compositionally biased region" description="Low complexity" evidence="2">
    <location>
        <begin position="77"/>
        <end position="92"/>
    </location>
</feature>
<feature type="compositionally biased region" description="Polar residues" evidence="2">
    <location>
        <begin position="99"/>
        <end position="108"/>
    </location>
</feature>
<feature type="glycosylation site" description="N-linked (GlcNAc...) asparagine; by host" evidence="1">
    <location>
        <position position="84"/>
    </location>
</feature>
<feature type="glycosylation site" description="N-linked (GlcNAc...) asparagine; by host" evidence="1">
    <location>
        <position position="89"/>
    </location>
</feature>
<feature type="glycosylation site" description="N-linked (GlcNAc...) asparagine; by host" evidence="1">
    <location>
        <position position="97"/>
    </location>
</feature>
<comment type="function">
    <text evidence="3">Envelope protein. Required for an early step in virion morphogenesis.</text>
</comment>
<comment type="subcellular location">
    <subcellularLocation>
        <location>Virion membrane</location>
        <topology>Single-pass membrane protein</topology>
    </subcellularLocation>
    <subcellularLocation>
        <location>Host cytoplasm</location>
    </subcellularLocation>
    <text>Component of the mature virion (MV) membrane. The mature virion is located in the cytoplasm of infected cells and is probably released by cell lysis. Also found in cytoplasmic virus factories.</text>
</comment>
<comment type="induction">
    <text evidence="3">Expressed in the late phase of the viral replicative cycle.</text>
</comment>
<comment type="similarity">
    <text evidence="4">Belongs to the oerthopoxvirus OPG135 family.</text>
</comment>
<name>PG135_VACCW</name>
<organism>
    <name type="scientific">Vaccinia virus (strain Western Reserve)</name>
    <name type="common">VACV</name>
    <name type="synonym">Vaccinia virus (strain WR)</name>
    <dbReference type="NCBI Taxonomy" id="10254"/>
    <lineage>
        <taxon>Viruses</taxon>
        <taxon>Varidnaviria</taxon>
        <taxon>Bamfordvirae</taxon>
        <taxon>Nucleocytoviricota</taxon>
        <taxon>Pokkesviricetes</taxon>
        <taxon>Chitovirales</taxon>
        <taxon>Poxviridae</taxon>
        <taxon>Chordopoxvirinae</taxon>
        <taxon>Orthopoxvirus</taxon>
        <taxon>Vaccinia virus</taxon>
    </lineage>
</organism>
<dbReference type="EMBL" id="M27634">
    <property type="protein sequence ID" value="AAA69586.1"/>
    <property type="molecule type" value="Genomic_DNA"/>
</dbReference>
<dbReference type="EMBL" id="AY243312">
    <property type="protein sequence ID" value="AAO89407.1"/>
    <property type="molecule type" value="Genomic_DNA"/>
</dbReference>
<dbReference type="PIR" id="B43497">
    <property type="entry name" value="B43497"/>
</dbReference>
<dbReference type="RefSeq" id="YP_233010.1">
    <property type="nucleotide sequence ID" value="NC_006998.1"/>
</dbReference>
<dbReference type="SMR" id="Q85320"/>
<dbReference type="DNASU" id="3707526"/>
<dbReference type="GeneID" id="3707526"/>
<dbReference type="KEGG" id="vg:3707526"/>
<dbReference type="Proteomes" id="UP000000344">
    <property type="component" value="Genome"/>
</dbReference>
<dbReference type="GO" id="GO:0030430">
    <property type="term" value="C:host cell cytoplasm"/>
    <property type="evidence" value="ECO:0007669"/>
    <property type="project" value="UniProtKB-SubCell"/>
</dbReference>
<dbReference type="GO" id="GO:0016020">
    <property type="term" value="C:membrane"/>
    <property type="evidence" value="ECO:0007669"/>
    <property type="project" value="UniProtKB-KW"/>
</dbReference>
<dbReference type="GO" id="GO:0019031">
    <property type="term" value="C:viral envelope"/>
    <property type="evidence" value="ECO:0007669"/>
    <property type="project" value="UniProtKB-KW"/>
</dbReference>
<dbReference type="GO" id="GO:0055036">
    <property type="term" value="C:virion membrane"/>
    <property type="evidence" value="ECO:0007669"/>
    <property type="project" value="UniProtKB-SubCell"/>
</dbReference>
<dbReference type="InterPro" id="IPR006920">
    <property type="entry name" value="Poxvirus_A9"/>
</dbReference>
<dbReference type="Pfam" id="PF04835">
    <property type="entry name" value="Pox_A9"/>
    <property type="match status" value="1"/>
</dbReference>
<proteinExistence type="evidence at transcript level"/>
<keyword id="KW-0325">Glycoprotein</keyword>
<keyword id="KW-1035">Host cytoplasm</keyword>
<keyword id="KW-0426">Late protein</keyword>
<keyword id="KW-0472">Membrane</keyword>
<keyword id="KW-1185">Reference proteome</keyword>
<keyword id="KW-0732">Signal</keyword>
<keyword id="KW-0812">Transmembrane</keyword>
<keyword id="KW-1133">Transmembrane helix</keyword>
<keyword id="KW-0261">Viral envelope protein</keyword>
<keyword id="KW-0946">Virion</keyword>
<evidence type="ECO:0000255" key="1"/>
<evidence type="ECO:0000256" key="2">
    <source>
        <dbReference type="SAM" id="MobiDB-lite"/>
    </source>
</evidence>
<evidence type="ECO:0000269" key="3">
    <source>
    </source>
</evidence>
<evidence type="ECO:0000305" key="4"/>
<accession>Q85320</accession>
<reference key="1">
    <citation type="journal article" date="1988" name="Arch. Virol.">
        <title>Fine structure of the vaccinia virus gene encoding the precursor of the major core protein 4 a.</title>
        <authorList>
            <person name="van Meir E."/>
            <person name="Wittek R."/>
        </authorList>
    </citation>
    <scope>NUCLEOTIDE SEQUENCE [GENOMIC DNA]</scope>
</reference>
<reference key="2">
    <citation type="submission" date="2003-02" db="EMBL/GenBank/DDBJ databases">
        <title>Sequencing of the coding region of Vaccinia-WR to an average 9-fold redundancy and an error rate of 0.16/10kb.</title>
        <authorList>
            <person name="Esposito J.J."/>
            <person name="Frace A.M."/>
            <person name="Sammons S.A."/>
            <person name="Olsen-Rasmussen M."/>
            <person name="Osborne J."/>
            <person name="Wohlhueter R."/>
        </authorList>
    </citation>
    <scope>NUCLEOTIDE SEQUENCE [LARGE SCALE GENOMIC DNA]</scope>
</reference>
<reference key="3">
    <citation type="journal article" date="2000" name="J. Virol.">
        <title>The vaccinia virus A9L gene encodes a membrane protein required for an early step in virion morphogenesis.</title>
        <authorList>
            <person name="Yeh W.W."/>
            <person name="Moss B."/>
            <person name="Wolffe E.J."/>
        </authorList>
    </citation>
    <scope>FUNCTION</scope>
    <scope>INDUCTION</scope>
    <scope>SUBCELLULAR LOCATION</scope>
</reference>
<reference key="4">
    <citation type="journal article" date="2007" name="J. Virol.">
        <title>Sequence-independent targeting of transmembrane proteins synthesized within vaccinia virus factories to nascent viral membranes.</title>
        <authorList>
            <person name="Husain M."/>
            <person name="Weisberg A.S."/>
            <person name="Moss B."/>
        </authorList>
    </citation>
    <scope>SUBCELLULAR LOCATION</scope>
</reference>
<organismHost>
    <name type="scientific">Bos taurus</name>
    <name type="common">Bovine</name>
    <dbReference type="NCBI Taxonomy" id="9913"/>
</organismHost>
<protein>
    <recommendedName>
        <fullName>Virion membrane protein OPG135</fullName>
    </recommendedName>
</protein>
<gene>
    <name type="primary">OPG135</name>
    <name type="ordered locus">VACWR128</name>
    <name type="ORF">A9L</name>
</gene>